<reference key="1">
    <citation type="submission" date="2008-02" db="EMBL/GenBank/DDBJ databases">
        <title>Complete sequence of Pseudomonas putida W619.</title>
        <authorList>
            <person name="Copeland A."/>
            <person name="Lucas S."/>
            <person name="Lapidus A."/>
            <person name="Barry K."/>
            <person name="Detter J.C."/>
            <person name="Glavina del Rio T."/>
            <person name="Dalin E."/>
            <person name="Tice H."/>
            <person name="Pitluck S."/>
            <person name="Chain P."/>
            <person name="Malfatti S."/>
            <person name="Shin M."/>
            <person name="Vergez L."/>
            <person name="Schmutz J."/>
            <person name="Larimer F."/>
            <person name="Land M."/>
            <person name="Hauser L."/>
            <person name="Kyrpides N."/>
            <person name="Kim E."/>
            <person name="Taghavi S."/>
            <person name="Vangronsveld D."/>
            <person name="van der Lelie D."/>
            <person name="Richardson P."/>
        </authorList>
    </citation>
    <scope>NUCLEOTIDE SEQUENCE [LARGE SCALE GENOMIC DNA]</scope>
    <source>
        <strain>W619</strain>
    </source>
</reference>
<protein>
    <recommendedName>
        <fullName evidence="1">Nucleoid-associated protein PputW619_3586</fullName>
    </recommendedName>
</protein>
<name>Y3586_PSEPW</name>
<accession>B1JBZ2</accession>
<keyword id="KW-0963">Cytoplasm</keyword>
<keyword id="KW-0238">DNA-binding</keyword>
<organism>
    <name type="scientific">Pseudomonas putida (strain W619)</name>
    <dbReference type="NCBI Taxonomy" id="390235"/>
    <lineage>
        <taxon>Bacteria</taxon>
        <taxon>Pseudomonadati</taxon>
        <taxon>Pseudomonadota</taxon>
        <taxon>Gammaproteobacteria</taxon>
        <taxon>Pseudomonadales</taxon>
        <taxon>Pseudomonadaceae</taxon>
        <taxon>Pseudomonas</taxon>
    </lineage>
</organism>
<gene>
    <name type="ordered locus">PputW619_3586</name>
</gene>
<sequence length="111" mass="11993">MMKGGMAGLMKQAQQMQEKMAKMQEELANAEVTGQSGGGLVSVVMTGRHDVKRVSIDQSLMSTEEDDKEVLEDLIAAALNDAVRKVEQSSQEKMGGMTAGMQLPPGFKMPF</sequence>
<evidence type="ECO:0000255" key="1">
    <source>
        <dbReference type="HAMAP-Rule" id="MF_00274"/>
    </source>
</evidence>
<evidence type="ECO:0000256" key="2">
    <source>
        <dbReference type="SAM" id="MobiDB-lite"/>
    </source>
</evidence>
<proteinExistence type="inferred from homology"/>
<feature type="chain" id="PRO_1000114635" description="Nucleoid-associated protein PputW619_3586">
    <location>
        <begin position="1"/>
        <end position="111"/>
    </location>
</feature>
<feature type="region of interest" description="Disordered" evidence="2">
    <location>
        <begin position="87"/>
        <end position="111"/>
    </location>
</feature>
<comment type="function">
    <text evidence="1">Binds to DNA and alters its conformation. May be involved in regulation of gene expression, nucleoid organization and DNA protection.</text>
</comment>
<comment type="subunit">
    <text evidence="1">Homodimer.</text>
</comment>
<comment type="subcellular location">
    <subcellularLocation>
        <location evidence="1">Cytoplasm</location>
        <location evidence="1">Nucleoid</location>
    </subcellularLocation>
</comment>
<comment type="similarity">
    <text evidence="1">Belongs to the YbaB/EbfC family.</text>
</comment>
<dbReference type="EMBL" id="CP000949">
    <property type="protein sequence ID" value="ACA74068.1"/>
    <property type="molecule type" value="Genomic_DNA"/>
</dbReference>
<dbReference type="SMR" id="B1JBZ2"/>
<dbReference type="STRING" id="390235.PputW619_3586"/>
<dbReference type="KEGG" id="ppw:PputW619_3586"/>
<dbReference type="eggNOG" id="COG0718">
    <property type="taxonomic scope" value="Bacteria"/>
</dbReference>
<dbReference type="HOGENOM" id="CLU_140930_0_0_6"/>
<dbReference type="OrthoDB" id="9808738at2"/>
<dbReference type="GO" id="GO:0043590">
    <property type="term" value="C:bacterial nucleoid"/>
    <property type="evidence" value="ECO:0007669"/>
    <property type="project" value="UniProtKB-UniRule"/>
</dbReference>
<dbReference type="GO" id="GO:0005829">
    <property type="term" value="C:cytosol"/>
    <property type="evidence" value="ECO:0007669"/>
    <property type="project" value="TreeGrafter"/>
</dbReference>
<dbReference type="GO" id="GO:0003677">
    <property type="term" value="F:DNA binding"/>
    <property type="evidence" value="ECO:0007669"/>
    <property type="project" value="UniProtKB-UniRule"/>
</dbReference>
<dbReference type="FunFam" id="3.30.1310.10:FF:000001">
    <property type="entry name" value="Nucleoid-associated protein YbaB"/>
    <property type="match status" value="1"/>
</dbReference>
<dbReference type="Gene3D" id="3.30.1310.10">
    <property type="entry name" value="Nucleoid-associated protein YbaB-like domain"/>
    <property type="match status" value="1"/>
</dbReference>
<dbReference type="HAMAP" id="MF_00274">
    <property type="entry name" value="DNA_YbaB_EbfC"/>
    <property type="match status" value="1"/>
</dbReference>
<dbReference type="InterPro" id="IPR036894">
    <property type="entry name" value="YbaB-like_sf"/>
</dbReference>
<dbReference type="InterPro" id="IPR004401">
    <property type="entry name" value="YbaB/EbfC"/>
</dbReference>
<dbReference type="NCBIfam" id="TIGR00103">
    <property type="entry name" value="DNA_YbaB_EbfC"/>
    <property type="match status" value="1"/>
</dbReference>
<dbReference type="PANTHER" id="PTHR33449">
    <property type="entry name" value="NUCLEOID-ASSOCIATED PROTEIN YBAB"/>
    <property type="match status" value="1"/>
</dbReference>
<dbReference type="PANTHER" id="PTHR33449:SF1">
    <property type="entry name" value="NUCLEOID-ASSOCIATED PROTEIN YBAB"/>
    <property type="match status" value="1"/>
</dbReference>
<dbReference type="Pfam" id="PF02575">
    <property type="entry name" value="YbaB_DNA_bd"/>
    <property type="match status" value="1"/>
</dbReference>
<dbReference type="PIRSF" id="PIRSF004555">
    <property type="entry name" value="UCP004555"/>
    <property type="match status" value="1"/>
</dbReference>
<dbReference type="SUPFAM" id="SSF82607">
    <property type="entry name" value="YbaB-like"/>
    <property type="match status" value="1"/>
</dbReference>